<keyword id="KW-0067">ATP-binding</keyword>
<keyword id="KW-0436">Ligase</keyword>
<keyword id="KW-0460">Magnesium</keyword>
<keyword id="KW-0479">Metal-binding</keyword>
<keyword id="KW-0547">Nucleotide-binding</keyword>
<keyword id="KW-1185">Reference proteome</keyword>
<keyword id="KW-0816">Tricarboxylic acid cycle</keyword>
<accession>A4FP60</accession>
<comment type="function">
    <text evidence="1">Succinyl-CoA synthetase functions in the citric acid cycle (TCA), coupling the hydrolysis of succinyl-CoA to the synthesis of either ATP or GTP and thus represents the only step of substrate-level phosphorylation in the TCA. The beta subunit provides nucleotide specificity of the enzyme and binds the substrate succinate, while the binding sites for coenzyme A and phosphate are found in the alpha subunit.</text>
</comment>
<comment type="catalytic activity">
    <reaction evidence="1">
        <text>succinate + ATP + CoA = succinyl-CoA + ADP + phosphate</text>
        <dbReference type="Rhea" id="RHEA:17661"/>
        <dbReference type="ChEBI" id="CHEBI:30031"/>
        <dbReference type="ChEBI" id="CHEBI:30616"/>
        <dbReference type="ChEBI" id="CHEBI:43474"/>
        <dbReference type="ChEBI" id="CHEBI:57287"/>
        <dbReference type="ChEBI" id="CHEBI:57292"/>
        <dbReference type="ChEBI" id="CHEBI:456216"/>
        <dbReference type="EC" id="6.2.1.5"/>
    </reaction>
    <physiologicalReaction direction="right-to-left" evidence="1">
        <dbReference type="Rhea" id="RHEA:17663"/>
    </physiologicalReaction>
</comment>
<comment type="catalytic activity">
    <reaction evidence="1">
        <text>GTP + succinate + CoA = succinyl-CoA + GDP + phosphate</text>
        <dbReference type="Rhea" id="RHEA:22120"/>
        <dbReference type="ChEBI" id="CHEBI:30031"/>
        <dbReference type="ChEBI" id="CHEBI:37565"/>
        <dbReference type="ChEBI" id="CHEBI:43474"/>
        <dbReference type="ChEBI" id="CHEBI:57287"/>
        <dbReference type="ChEBI" id="CHEBI:57292"/>
        <dbReference type="ChEBI" id="CHEBI:58189"/>
    </reaction>
    <physiologicalReaction direction="right-to-left" evidence="1">
        <dbReference type="Rhea" id="RHEA:22122"/>
    </physiologicalReaction>
</comment>
<comment type="cofactor">
    <cofactor evidence="1">
        <name>Mg(2+)</name>
        <dbReference type="ChEBI" id="CHEBI:18420"/>
    </cofactor>
    <text evidence="1">Binds 1 Mg(2+) ion per subunit.</text>
</comment>
<comment type="pathway">
    <text evidence="1">Carbohydrate metabolism; tricarboxylic acid cycle; succinate from succinyl-CoA (ligase route): step 1/1.</text>
</comment>
<comment type="subunit">
    <text evidence="1">Heterotetramer of two alpha and two beta subunits.</text>
</comment>
<comment type="similarity">
    <text evidence="1">Belongs to the succinate/malate CoA ligase beta subunit family.</text>
</comment>
<name>SUCC_SACEN</name>
<reference key="1">
    <citation type="journal article" date="2007" name="Nat. Biotechnol.">
        <title>Complete genome sequence of the erythromycin-producing bacterium Saccharopolyspora erythraea NRRL23338.</title>
        <authorList>
            <person name="Oliynyk M."/>
            <person name="Samborskyy M."/>
            <person name="Lester J.B."/>
            <person name="Mironenko T."/>
            <person name="Scott N."/>
            <person name="Dickens S."/>
            <person name="Haydock S.F."/>
            <person name="Leadlay P.F."/>
        </authorList>
    </citation>
    <scope>NUCLEOTIDE SEQUENCE [LARGE SCALE GENOMIC DNA]</scope>
    <source>
        <strain>ATCC 11635 / DSM 40517 / JCM 4748 / NBRC 13426 / NCIMB 8594 / NRRL 2338</strain>
    </source>
</reference>
<proteinExistence type="inferred from homology"/>
<dbReference type="EC" id="6.2.1.5" evidence="1"/>
<dbReference type="EMBL" id="AM420293">
    <property type="protein sequence ID" value="CAM05835.1"/>
    <property type="molecule type" value="Genomic_DNA"/>
</dbReference>
<dbReference type="RefSeq" id="WP_009943410.1">
    <property type="nucleotide sequence ID" value="NC_009142.1"/>
</dbReference>
<dbReference type="SMR" id="A4FP60"/>
<dbReference type="STRING" id="405948.SACE_6669"/>
<dbReference type="KEGG" id="sen:SACE_6669"/>
<dbReference type="eggNOG" id="COG0045">
    <property type="taxonomic scope" value="Bacteria"/>
</dbReference>
<dbReference type="HOGENOM" id="CLU_037430_4_0_11"/>
<dbReference type="OrthoDB" id="9802602at2"/>
<dbReference type="UniPathway" id="UPA00223">
    <property type="reaction ID" value="UER00999"/>
</dbReference>
<dbReference type="Proteomes" id="UP000006728">
    <property type="component" value="Chromosome"/>
</dbReference>
<dbReference type="GO" id="GO:0005829">
    <property type="term" value="C:cytosol"/>
    <property type="evidence" value="ECO:0007669"/>
    <property type="project" value="TreeGrafter"/>
</dbReference>
<dbReference type="GO" id="GO:0042709">
    <property type="term" value="C:succinate-CoA ligase complex"/>
    <property type="evidence" value="ECO:0007669"/>
    <property type="project" value="TreeGrafter"/>
</dbReference>
<dbReference type="GO" id="GO:0005524">
    <property type="term" value="F:ATP binding"/>
    <property type="evidence" value="ECO:0007669"/>
    <property type="project" value="UniProtKB-UniRule"/>
</dbReference>
<dbReference type="GO" id="GO:0000287">
    <property type="term" value="F:magnesium ion binding"/>
    <property type="evidence" value="ECO:0007669"/>
    <property type="project" value="UniProtKB-UniRule"/>
</dbReference>
<dbReference type="GO" id="GO:0004775">
    <property type="term" value="F:succinate-CoA ligase (ADP-forming) activity"/>
    <property type="evidence" value="ECO:0007669"/>
    <property type="project" value="UniProtKB-UniRule"/>
</dbReference>
<dbReference type="GO" id="GO:0004776">
    <property type="term" value="F:succinate-CoA ligase (GDP-forming) activity"/>
    <property type="evidence" value="ECO:0007669"/>
    <property type="project" value="RHEA"/>
</dbReference>
<dbReference type="GO" id="GO:0006104">
    <property type="term" value="P:succinyl-CoA metabolic process"/>
    <property type="evidence" value="ECO:0007669"/>
    <property type="project" value="TreeGrafter"/>
</dbReference>
<dbReference type="GO" id="GO:0006099">
    <property type="term" value="P:tricarboxylic acid cycle"/>
    <property type="evidence" value="ECO:0007669"/>
    <property type="project" value="UniProtKB-UniRule"/>
</dbReference>
<dbReference type="FunFam" id="3.30.1490.20:FF:000014">
    <property type="entry name" value="Succinate--CoA ligase [ADP-forming] subunit beta"/>
    <property type="match status" value="1"/>
</dbReference>
<dbReference type="FunFam" id="3.30.470.20:FF:000002">
    <property type="entry name" value="Succinate--CoA ligase [ADP-forming] subunit beta"/>
    <property type="match status" value="1"/>
</dbReference>
<dbReference type="FunFam" id="3.40.50.261:FF:000007">
    <property type="entry name" value="Succinate--CoA ligase [ADP-forming] subunit beta"/>
    <property type="match status" value="1"/>
</dbReference>
<dbReference type="Gene3D" id="3.30.1490.20">
    <property type="entry name" value="ATP-grasp fold, A domain"/>
    <property type="match status" value="1"/>
</dbReference>
<dbReference type="Gene3D" id="3.30.470.20">
    <property type="entry name" value="ATP-grasp fold, B domain"/>
    <property type="match status" value="1"/>
</dbReference>
<dbReference type="Gene3D" id="3.40.50.261">
    <property type="entry name" value="Succinyl-CoA synthetase domains"/>
    <property type="match status" value="1"/>
</dbReference>
<dbReference type="HAMAP" id="MF_00558">
    <property type="entry name" value="Succ_CoA_beta"/>
    <property type="match status" value="1"/>
</dbReference>
<dbReference type="InterPro" id="IPR011761">
    <property type="entry name" value="ATP-grasp"/>
</dbReference>
<dbReference type="InterPro" id="IPR013650">
    <property type="entry name" value="ATP-grasp_succ-CoA_synth-type"/>
</dbReference>
<dbReference type="InterPro" id="IPR013815">
    <property type="entry name" value="ATP_grasp_subdomain_1"/>
</dbReference>
<dbReference type="InterPro" id="IPR017866">
    <property type="entry name" value="Succ-CoA_synthase_bsu_CS"/>
</dbReference>
<dbReference type="InterPro" id="IPR005811">
    <property type="entry name" value="SUCC_ACL_C"/>
</dbReference>
<dbReference type="InterPro" id="IPR005809">
    <property type="entry name" value="Succ_CoA_ligase-like_bsu"/>
</dbReference>
<dbReference type="InterPro" id="IPR016102">
    <property type="entry name" value="Succinyl-CoA_synth-like"/>
</dbReference>
<dbReference type="NCBIfam" id="NF001913">
    <property type="entry name" value="PRK00696.1"/>
    <property type="match status" value="1"/>
</dbReference>
<dbReference type="NCBIfam" id="TIGR01016">
    <property type="entry name" value="sucCoAbeta"/>
    <property type="match status" value="1"/>
</dbReference>
<dbReference type="PANTHER" id="PTHR11815:SF10">
    <property type="entry name" value="SUCCINATE--COA LIGASE [GDP-FORMING] SUBUNIT BETA, MITOCHONDRIAL"/>
    <property type="match status" value="1"/>
</dbReference>
<dbReference type="PANTHER" id="PTHR11815">
    <property type="entry name" value="SUCCINYL-COA SYNTHETASE BETA CHAIN"/>
    <property type="match status" value="1"/>
</dbReference>
<dbReference type="Pfam" id="PF08442">
    <property type="entry name" value="ATP-grasp_2"/>
    <property type="match status" value="1"/>
</dbReference>
<dbReference type="Pfam" id="PF00549">
    <property type="entry name" value="Ligase_CoA"/>
    <property type="match status" value="1"/>
</dbReference>
<dbReference type="PIRSF" id="PIRSF001554">
    <property type="entry name" value="SucCS_beta"/>
    <property type="match status" value="1"/>
</dbReference>
<dbReference type="SUPFAM" id="SSF56059">
    <property type="entry name" value="Glutathione synthetase ATP-binding domain-like"/>
    <property type="match status" value="1"/>
</dbReference>
<dbReference type="SUPFAM" id="SSF52210">
    <property type="entry name" value="Succinyl-CoA synthetase domains"/>
    <property type="match status" value="1"/>
</dbReference>
<dbReference type="PROSITE" id="PS50975">
    <property type="entry name" value="ATP_GRASP"/>
    <property type="match status" value="1"/>
</dbReference>
<dbReference type="PROSITE" id="PS01217">
    <property type="entry name" value="SUCCINYL_COA_LIG_3"/>
    <property type="match status" value="1"/>
</dbReference>
<feature type="chain" id="PRO_1000082210" description="Succinate--CoA ligase [ADP-forming] subunit beta">
    <location>
        <begin position="1"/>
        <end position="389"/>
    </location>
</feature>
<feature type="domain" description="ATP-grasp" evidence="1">
    <location>
        <begin position="9"/>
        <end position="236"/>
    </location>
</feature>
<feature type="binding site" evidence="1">
    <location>
        <position position="45"/>
    </location>
    <ligand>
        <name>ATP</name>
        <dbReference type="ChEBI" id="CHEBI:30616"/>
    </ligand>
</feature>
<feature type="binding site" evidence="1">
    <location>
        <begin position="52"/>
        <end position="54"/>
    </location>
    <ligand>
        <name>ATP</name>
        <dbReference type="ChEBI" id="CHEBI:30616"/>
    </ligand>
</feature>
<feature type="binding site" evidence="1">
    <location>
        <position position="94"/>
    </location>
    <ligand>
        <name>ATP</name>
        <dbReference type="ChEBI" id="CHEBI:30616"/>
    </ligand>
</feature>
<feature type="binding site" evidence="1">
    <location>
        <position position="99"/>
    </location>
    <ligand>
        <name>ATP</name>
        <dbReference type="ChEBI" id="CHEBI:30616"/>
    </ligand>
</feature>
<feature type="binding site" evidence="1">
    <location>
        <position position="191"/>
    </location>
    <ligand>
        <name>Mg(2+)</name>
        <dbReference type="ChEBI" id="CHEBI:18420"/>
    </ligand>
</feature>
<feature type="binding site" evidence="1">
    <location>
        <position position="205"/>
    </location>
    <ligand>
        <name>Mg(2+)</name>
        <dbReference type="ChEBI" id="CHEBI:18420"/>
    </ligand>
</feature>
<feature type="binding site" evidence="1">
    <location>
        <position position="256"/>
    </location>
    <ligand>
        <name>substrate</name>
        <note>ligand shared with subunit alpha</note>
    </ligand>
</feature>
<feature type="binding site" evidence="1">
    <location>
        <begin position="318"/>
        <end position="320"/>
    </location>
    <ligand>
        <name>substrate</name>
        <note>ligand shared with subunit alpha</note>
    </ligand>
</feature>
<evidence type="ECO:0000255" key="1">
    <source>
        <dbReference type="HAMAP-Rule" id="MF_00558"/>
    </source>
</evidence>
<gene>
    <name evidence="1" type="primary">sucC</name>
    <name type="ordered locus">SACE_6669</name>
</gene>
<sequence length="389" mass="40562">MDLYEYQAKELFASHGVPTLPGSVATDSDGAKAAAEQLGGPVVVKAQVKTGGRGKAGGVKLAENPDEAKTKAEAILGLDIKGHITRRVLITTASDIVDEYYFSFLLDRANRNFLAMASVEGGMEIEEVAATKPEALAKIAIDPIQGVDEAKAREIVDAAKFPAEIADQVVEVVVKLWETFVAEDATLVEINPLVKDPQGKIIALDGKVTLDENASFRQPKQAELVDKDAEDPLEAKAKAKDLNYVKLDGEVGIIGNGAGLVMSTLDVVAYAGEKHNGVKPANFLDIGGGASAEVMAAGLDVILGDPAVKSVFVNVFGGITACDAVANGIVQALKILGDEATKPLVVRLDGNNVEEGRRILAEANHPAVTMVDTMDGAADKAAELAAAGA</sequence>
<protein>
    <recommendedName>
        <fullName evidence="1">Succinate--CoA ligase [ADP-forming] subunit beta</fullName>
        <ecNumber evidence="1">6.2.1.5</ecNumber>
    </recommendedName>
    <alternativeName>
        <fullName evidence="1">Succinyl-CoA synthetase subunit beta</fullName>
        <shortName evidence="1">SCS-beta</shortName>
    </alternativeName>
</protein>
<organism>
    <name type="scientific">Saccharopolyspora erythraea (strain ATCC 11635 / DSM 40517 / JCM 4748 / NBRC 13426 / NCIMB 8594 / NRRL 2338)</name>
    <dbReference type="NCBI Taxonomy" id="405948"/>
    <lineage>
        <taxon>Bacteria</taxon>
        <taxon>Bacillati</taxon>
        <taxon>Actinomycetota</taxon>
        <taxon>Actinomycetes</taxon>
        <taxon>Pseudonocardiales</taxon>
        <taxon>Pseudonocardiaceae</taxon>
        <taxon>Saccharopolyspora</taxon>
    </lineage>
</organism>